<proteinExistence type="inferred from homology"/>
<keyword id="KW-0472">Membrane</keyword>
<keyword id="KW-1185">Reference proteome</keyword>
<keyword id="KW-0812">Transmembrane</keyword>
<keyword id="KW-1133">Transmembrane helix</keyword>
<name>DLT1_CANGA</name>
<sequence>MILQEQRRLRLWLYKSSLFISVLFLIGFSIVLPVDSIVQAIQSENNGFNTIIVIGSLAVFFVAAVTILIGRMLLHKSCLKDIPRRYIPVTNADLPHKSSRKMVIHNMERSKKLSGLFKTPKDPVIHPGLEPPARCDDPNTPKILPEYLNYKICIKSATDRLKYYGLFLNSASDDVKSSQTFTDLVKSQFIKGNHNKRQVQRAKDFIELYERIRFSGDEVSRSEFIQFAENCIYFSDLMITMDITKVGLGNISTRSQLSFNIAGSSVDRKLRKLNTARSNQISRLSSGQYPDITAFRYDTSNSDYHRQETDEDDFALDDMDYFPSVPPYMIRRNSTNTVSMRIPTSNSDDQYNLGFNEIGDEDIQNNDQIRRYMSNTSKTDSFKTVIHNG</sequence>
<comment type="function">
    <text evidence="1">Required for growth under high-pressure and low-temperature conditions.</text>
</comment>
<comment type="subcellular location">
    <subcellularLocation>
        <location evidence="3">Membrane</location>
        <topology evidence="3">Multi-pass membrane protein</topology>
    </subcellularLocation>
</comment>
<comment type="similarity">
    <text evidence="3">Belongs to the DLT1 family.</text>
</comment>
<gene>
    <name type="primary">DLT1</name>
    <name type="ordered locus">CAGL0K03751g</name>
</gene>
<evidence type="ECO:0000250" key="1"/>
<evidence type="ECO:0000255" key="2"/>
<evidence type="ECO:0000305" key="3"/>
<organism>
    <name type="scientific">Candida glabrata (strain ATCC 2001 / BCRC 20586 / JCM 3761 / NBRC 0622 / NRRL Y-65 / CBS 138)</name>
    <name type="common">Yeast</name>
    <name type="synonym">Nakaseomyces glabratus</name>
    <dbReference type="NCBI Taxonomy" id="284593"/>
    <lineage>
        <taxon>Eukaryota</taxon>
        <taxon>Fungi</taxon>
        <taxon>Dikarya</taxon>
        <taxon>Ascomycota</taxon>
        <taxon>Saccharomycotina</taxon>
        <taxon>Saccharomycetes</taxon>
        <taxon>Saccharomycetales</taxon>
        <taxon>Saccharomycetaceae</taxon>
        <taxon>Nakaseomyces</taxon>
    </lineage>
</organism>
<dbReference type="EMBL" id="CR380957">
    <property type="protein sequence ID" value="CAG61349.1"/>
    <property type="molecule type" value="Genomic_DNA"/>
</dbReference>
<dbReference type="RefSeq" id="XP_448388.1">
    <property type="nucleotide sequence ID" value="XM_448388.1"/>
</dbReference>
<dbReference type="FunCoup" id="Q6FN06">
    <property type="interactions" value="23"/>
</dbReference>
<dbReference type="STRING" id="284593.Q6FN06"/>
<dbReference type="EnsemblFungi" id="CAGL0K03751g-T">
    <property type="protein sequence ID" value="CAGL0K03751g-T-p1"/>
    <property type="gene ID" value="CAGL0K03751g"/>
</dbReference>
<dbReference type="KEGG" id="cgr:2890138"/>
<dbReference type="CGD" id="CAL0134465">
    <property type="gene designation" value="CAGL0K03751g"/>
</dbReference>
<dbReference type="VEuPathDB" id="FungiDB:CAGL0K03751g"/>
<dbReference type="eggNOG" id="ENOG502RAJJ">
    <property type="taxonomic scope" value="Eukaryota"/>
</dbReference>
<dbReference type="HOGENOM" id="CLU_066044_0_0_1"/>
<dbReference type="InParanoid" id="Q6FN06"/>
<dbReference type="OMA" id="YESFQFS"/>
<dbReference type="Proteomes" id="UP000002428">
    <property type="component" value="Chromosome K"/>
</dbReference>
<dbReference type="GO" id="GO:0016020">
    <property type="term" value="C:membrane"/>
    <property type="evidence" value="ECO:0007669"/>
    <property type="project" value="UniProtKB-SubCell"/>
</dbReference>
<dbReference type="InterPro" id="IPR038869">
    <property type="entry name" value="DLT1"/>
</dbReference>
<dbReference type="PANTHER" id="PTHR40021">
    <property type="entry name" value="DEFECT AT LOW TEMPERATURE PROTEIN 1"/>
    <property type="match status" value="1"/>
</dbReference>
<dbReference type="PANTHER" id="PTHR40021:SF1">
    <property type="entry name" value="DEFECT AT LOW TEMPERATURE PROTEIN 1"/>
    <property type="match status" value="1"/>
</dbReference>
<feature type="chain" id="PRO_0000399020" description="Defect at low temperature protein 1">
    <location>
        <begin position="1"/>
        <end position="389"/>
    </location>
</feature>
<feature type="topological domain" description="Cytoplasmic" evidence="2">
    <location>
        <begin position="1"/>
        <end position="17"/>
    </location>
</feature>
<feature type="transmembrane region" description="Helical" evidence="2">
    <location>
        <begin position="18"/>
        <end position="38"/>
    </location>
</feature>
<feature type="topological domain" description="Extracellular" evidence="2">
    <location>
        <begin position="39"/>
        <end position="49"/>
    </location>
</feature>
<feature type="transmembrane region" description="Helical" evidence="2">
    <location>
        <begin position="50"/>
        <end position="70"/>
    </location>
</feature>
<feature type="topological domain" description="Cytoplasmic" evidence="2">
    <location>
        <begin position="71"/>
        <end position="389"/>
    </location>
</feature>
<protein>
    <recommendedName>
        <fullName>Defect at low temperature protein 1</fullName>
    </recommendedName>
</protein>
<reference key="1">
    <citation type="journal article" date="2004" name="Nature">
        <title>Genome evolution in yeasts.</title>
        <authorList>
            <person name="Dujon B."/>
            <person name="Sherman D."/>
            <person name="Fischer G."/>
            <person name="Durrens P."/>
            <person name="Casaregola S."/>
            <person name="Lafontaine I."/>
            <person name="de Montigny J."/>
            <person name="Marck C."/>
            <person name="Neuveglise C."/>
            <person name="Talla E."/>
            <person name="Goffard N."/>
            <person name="Frangeul L."/>
            <person name="Aigle M."/>
            <person name="Anthouard V."/>
            <person name="Babour A."/>
            <person name="Barbe V."/>
            <person name="Barnay S."/>
            <person name="Blanchin S."/>
            <person name="Beckerich J.-M."/>
            <person name="Beyne E."/>
            <person name="Bleykasten C."/>
            <person name="Boisrame A."/>
            <person name="Boyer J."/>
            <person name="Cattolico L."/>
            <person name="Confanioleri F."/>
            <person name="de Daruvar A."/>
            <person name="Despons L."/>
            <person name="Fabre E."/>
            <person name="Fairhead C."/>
            <person name="Ferry-Dumazet H."/>
            <person name="Groppi A."/>
            <person name="Hantraye F."/>
            <person name="Hennequin C."/>
            <person name="Jauniaux N."/>
            <person name="Joyet P."/>
            <person name="Kachouri R."/>
            <person name="Kerrest A."/>
            <person name="Koszul R."/>
            <person name="Lemaire M."/>
            <person name="Lesur I."/>
            <person name="Ma L."/>
            <person name="Muller H."/>
            <person name="Nicaud J.-M."/>
            <person name="Nikolski M."/>
            <person name="Oztas S."/>
            <person name="Ozier-Kalogeropoulos O."/>
            <person name="Pellenz S."/>
            <person name="Potier S."/>
            <person name="Richard G.-F."/>
            <person name="Straub M.-L."/>
            <person name="Suleau A."/>
            <person name="Swennen D."/>
            <person name="Tekaia F."/>
            <person name="Wesolowski-Louvel M."/>
            <person name="Westhof E."/>
            <person name="Wirth B."/>
            <person name="Zeniou-Meyer M."/>
            <person name="Zivanovic Y."/>
            <person name="Bolotin-Fukuhara M."/>
            <person name="Thierry A."/>
            <person name="Bouchier C."/>
            <person name="Caudron B."/>
            <person name="Scarpelli C."/>
            <person name="Gaillardin C."/>
            <person name="Weissenbach J."/>
            <person name="Wincker P."/>
            <person name="Souciet J.-L."/>
        </authorList>
    </citation>
    <scope>NUCLEOTIDE SEQUENCE [LARGE SCALE GENOMIC DNA]</scope>
    <source>
        <strain>ATCC 2001 / BCRC 20586 / JCM 3761 / NBRC 0622 / NRRL Y-65 / CBS 138</strain>
    </source>
</reference>
<accession>Q6FN06</accession>